<keyword id="KW-1064">Adaptive immunity</keyword>
<keyword id="KW-1003">Cell membrane</keyword>
<keyword id="KW-1015">Disulfide bond</keyword>
<keyword id="KW-0325">Glycoprotein</keyword>
<keyword id="KW-0391">Immunity</keyword>
<keyword id="KW-0472">Membrane</keyword>
<keyword id="KW-0597">Phosphoprotein</keyword>
<keyword id="KW-0675">Receptor</keyword>
<keyword id="KW-1185">Reference proteome</keyword>
<keyword id="KW-0732">Signal</keyword>
<keyword id="KW-0812">Transmembrane</keyword>
<keyword id="KW-1133">Transmembrane helix</keyword>
<reference key="1">
    <citation type="submission" date="2005-08" db="EMBL/GenBank/DDBJ databases">
        <authorList>
            <consortium name="NIH - Mammalian Gene Collection (MGC) project"/>
        </authorList>
    </citation>
    <scope>NUCLEOTIDE SEQUENCE [LARGE SCALE MRNA]</scope>
    <source>
        <strain>Crossbred X Angus</strain>
        <tissue>Ileum</tissue>
    </source>
</reference>
<reference key="2">
    <citation type="journal article" date="1990" name="Eur. J. Immunol.">
        <title>Identification of a bovine surface antigen uniquely expressed on CD4-CD8-T cell receptor gamma/delta+ T lymphocytes.</title>
        <authorList>
            <person name="Clevers H."/>
            <person name="Machugh N.D."/>
            <person name="Bensaid A."/>
            <person name="Dunlap S."/>
            <person name="Baldwin C.L."/>
            <person name="Kaushal A."/>
            <person name="Iams K."/>
            <person name="Howard C.J."/>
            <person name="Morrison W.I."/>
        </authorList>
    </citation>
    <scope>NUCLEOTIDE SEQUENCE [MRNA] OF 1-62</scope>
</reference>
<dbReference type="EMBL" id="BC102857">
    <property type="protein sequence ID" value="AAI02858.1"/>
    <property type="molecule type" value="mRNA"/>
</dbReference>
<dbReference type="EMBL" id="X53269">
    <property type="protein sequence ID" value="CAA37367.1"/>
    <property type="molecule type" value="mRNA"/>
</dbReference>
<dbReference type="PIR" id="B60232">
    <property type="entry name" value="B60232"/>
</dbReference>
<dbReference type="RefSeq" id="NP_001029205.1">
    <property type="nucleotide sequence ID" value="NM_001034033.2"/>
</dbReference>
<dbReference type="SMR" id="Q28072"/>
<dbReference type="FunCoup" id="Q28072">
    <property type="interactions" value="432"/>
</dbReference>
<dbReference type="STRING" id="9913.ENSBTAP00000008462"/>
<dbReference type="GlyCosmos" id="Q28072">
    <property type="glycosylation" value="2 sites, No reported glycans"/>
</dbReference>
<dbReference type="GlyGen" id="Q28072">
    <property type="glycosylation" value="2 sites"/>
</dbReference>
<dbReference type="PaxDb" id="9913-ENSBTAP00000008462"/>
<dbReference type="Ensembl" id="ENSBTAT00000008462.5">
    <property type="protein sequence ID" value="ENSBTAP00000008462.4"/>
    <property type="gene ID" value="ENSBTAG00000006452.7"/>
</dbReference>
<dbReference type="GeneID" id="281053"/>
<dbReference type="KEGG" id="bta:281053"/>
<dbReference type="CTD" id="915"/>
<dbReference type="VEuPathDB" id="HostDB:ENSBTAG00000006452"/>
<dbReference type="VGNC" id="VGNC:27028">
    <property type="gene designation" value="CD3D"/>
</dbReference>
<dbReference type="eggNOG" id="ENOG502S4XC">
    <property type="taxonomic scope" value="Eukaryota"/>
</dbReference>
<dbReference type="GeneTree" id="ENSGT00940000153312"/>
<dbReference type="HOGENOM" id="CLU_115449_0_0_1"/>
<dbReference type="InParanoid" id="Q28072"/>
<dbReference type="OMA" id="YQPLRDH"/>
<dbReference type="OrthoDB" id="8941324at2759"/>
<dbReference type="TreeFam" id="TF335892"/>
<dbReference type="Reactome" id="R-BTA-198933">
    <property type="pathway name" value="Immunoregulatory interactions between a Lymphoid and a non-Lymphoid cell"/>
</dbReference>
<dbReference type="Reactome" id="R-BTA-202424">
    <property type="pathway name" value="Downstream TCR signaling"/>
</dbReference>
<dbReference type="Reactome" id="R-BTA-202427">
    <property type="pathway name" value="Phosphorylation of CD3 and TCR zeta chains"/>
</dbReference>
<dbReference type="Reactome" id="R-BTA-202430">
    <property type="pathway name" value="Translocation of ZAP-70 to Immunological synapse"/>
</dbReference>
<dbReference type="Reactome" id="R-BTA-202433">
    <property type="pathway name" value="Generation of second messenger molecules"/>
</dbReference>
<dbReference type="Reactome" id="R-BTA-389948">
    <property type="pathway name" value="Co-inhibition by PD-1"/>
</dbReference>
<dbReference type="Reactome" id="R-BTA-8856825">
    <property type="pathway name" value="Cargo recognition for clathrin-mediated endocytosis"/>
</dbReference>
<dbReference type="Reactome" id="R-BTA-8856828">
    <property type="pathway name" value="Clathrin-mediated endocytosis"/>
</dbReference>
<dbReference type="Proteomes" id="UP000009136">
    <property type="component" value="Chromosome 15"/>
</dbReference>
<dbReference type="Bgee" id="ENSBTAG00000006452">
    <property type="expression patterns" value="Expressed in thymus and 100 other cell types or tissues"/>
</dbReference>
<dbReference type="GO" id="GO:0042105">
    <property type="term" value="C:alpha-beta T cell receptor complex"/>
    <property type="evidence" value="ECO:0000318"/>
    <property type="project" value="GO_Central"/>
</dbReference>
<dbReference type="GO" id="GO:0009897">
    <property type="term" value="C:external side of plasma membrane"/>
    <property type="evidence" value="ECO:0000318"/>
    <property type="project" value="GO_Central"/>
</dbReference>
<dbReference type="GO" id="GO:0004888">
    <property type="term" value="F:transmembrane signaling receptor activity"/>
    <property type="evidence" value="ECO:0000318"/>
    <property type="project" value="GO_Central"/>
</dbReference>
<dbReference type="GO" id="GO:0002250">
    <property type="term" value="P:adaptive immune response"/>
    <property type="evidence" value="ECO:0007669"/>
    <property type="project" value="UniProtKB-KW"/>
</dbReference>
<dbReference type="GO" id="GO:0007166">
    <property type="term" value="P:cell surface receptor signaling pathway"/>
    <property type="evidence" value="ECO:0000318"/>
    <property type="project" value="GO_Central"/>
</dbReference>
<dbReference type="GO" id="GO:0045059">
    <property type="term" value="P:positive thymic T cell selection"/>
    <property type="evidence" value="ECO:0000318"/>
    <property type="project" value="GO_Central"/>
</dbReference>
<dbReference type="FunFam" id="2.60.40.10:FF:001361">
    <property type="entry name" value="T-cell surface glycoprotein CD3 delta chain"/>
    <property type="match status" value="1"/>
</dbReference>
<dbReference type="Gene3D" id="2.60.40.10">
    <property type="entry name" value="Immunoglobulins"/>
    <property type="match status" value="1"/>
</dbReference>
<dbReference type="Gene3D" id="1.10.287.770">
    <property type="entry name" value="YojJ-like"/>
    <property type="match status" value="1"/>
</dbReference>
<dbReference type="InterPro" id="IPR015484">
    <property type="entry name" value="CD3_esu/gsu/dsu"/>
</dbReference>
<dbReference type="InterPro" id="IPR036179">
    <property type="entry name" value="Ig-like_dom_sf"/>
</dbReference>
<dbReference type="InterPro" id="IPR013783">
    <property type="entry name" value="Ig-like_fold"/>
</dbReference>
<dbReference type="InterPro" id="IPR032052">
    <property type="entry name" value="Ig_4"/>
</dbReference>
<dbReference type="InterPro" id="IPR003110">
    <property type="entry name" value="Phos_immunorcpt_sig_ITAM"/>
</dbReference>
<dbReference type="PANTHER" id="PTHR10570:SF5">
    <property type="entry name" value="T-CELL SURFACE GLYCOPROTEIN CD3 DELTA CHAIN"/>
    <property type="match status" value="1"/>
</dbReference>
<dbReference type="PANTHER" id="PTHR10570">
    <property type="entry name" value="T-CELL SURFACE GLYCOPROTEIN CD3 GAMMA CHAIN / DELTA CHAIN"/>
    <property type="match status" value="1"/>
</dbReference>
<dbReference type="Pfam" id="PF16680">
    <property type="entry name" value="Ig_4"/>
    <property type="match status" value="1"/>
</dbReference>
<dbReference type="Pfam" id="PF02189">
    <property type="entry name" value="ITAM"/>
    <property type="match status" value="1"/>
</dbReference>
<dbReference type="SMART" id="SM00077">
    <property type="entry name" value="ITAM"/>
    <property type="match status" value="1"/>
</dbReference>
<dbReference type="SUPFAM" id="SSF48726">
    <property type="entry name" value="Immunoglobulin"/>
    <property type="match status" value="1"/>
</dbReference>
<dbReference type="PROSITE" id="PS51055">
    <property type="entry name" value="ITAM_1"/>
    <property type="match status" value="1"/>
</dbReference>
<comment type="function">
    <text evidence="2">Part of the TCR-CD3 complex present on T-lymphocyte cell surface that plays an essential role in adaptive immune response. When antigen presenting cells (APCs) activate T-cell receptor (TCR), TCR-mediated signals are transmitted across the cell membrane by the CD3 chains CD3D, CD3E, CD3G and CD3Z. All CD3 chains contain immunoreceptor tyrosine-based activation motifs (ITAMs) in their cytoplasmic domain. Upon TCR engagement, these motifs become phosphorylated by Src family protein tyrosine kinases LCK and FYN, resulting in the activation of downstream signaling pathways. In addition of this role of signal transduction in T-cell activation, CD3D plays an essential role in thymocyte differentiation. Indeed, participates in correct intracellular TCR-CD3 complex assembly and surface expression. In absence of a functional TCR-CD3 complex, thymocytes are unable to differentiate properly. Interacts with CD4 and CD8 and thus serves to establish a functional link between the TCR and coreceptors CD4 and CD8, which is needed for activation and positive selection of CD4 or CD8 T-cells.</text>
</comment>
<comment type="subunit">
    <text evidence="2">The TCR-CD3 complex is composed of a CD3D/CD3E and a CD3G/CD3E heterodimers that preferentially associate with TCRalpha and TCRbeta, respectively, to form TCRalpha/CD3E/CD3G and TCRbeta/CD3G/CD3E trimers. In turn, the hexamer interacts with CD3Z homodimer to form the TCR-CD3 complex. Alternatively, TCRalpha and TCRbeta can be replaced by TCRgamma and TCRdelta. Interacts with coreceptors CD4 and CD8.</text>
</comment>
<comment type="subcellular location">
    <subcellularLocation>
        <location evidence="2">Cell membrane</location>
        <topology evidence="2">Single-pass type I membrane protein</topology>
    </subcellularLocation>
</comment>
<comment type="tissue specificity">
    <text evidence="2">CD3D is mostly present on T-lymphocytes with its TCR-CD3 partners. Present also in fetal NK-cells.</text>
</comment>
<comment type="PTM">
    <text evidence="2">Phosphorylated on Tyr residues after T-cell receptor triggering by LCK in association with CD4/CD8.</text>
</comment>
<proteinExistence type="evidence at transcript level"/>
<gene>
    <name type="primary">CD3D</name>
</gene>
<sequence>MEHSRFLSCLILAALLSQVNPRILKVLEPEDKVMLECNSSITLLQGTEGQEVSGNNKTRDLGKRIQDPRGMYRCGENTQQLILQVYYRMCQNCVELDTATLAGMIITDIIATVLLALGVYCFAGHETGRFSRAADTQALMGNDQLYQPLRERNDAQYSRLGDKWARNK</sequence>
<protein>
    <recommendedName>
        <fullName>T-cell surface glycoprotein CD3 delta chain</fullName>
    </recommendedName>
    <alternativeName>
        <fullName>T-cell receptor T3 delta chain</fullName>
    </alternativeName>
    <cdAntigenName>CD3d</cdAntigenName>
</protein>
<name>CD3D_BOVIN</name>
<feature type="signal peptide" evidence="1">
    <location>
        <begin position="1"/>
        <end position="21"/>
    </location>
</feature>
<feature type="chain" id="PRO_0000016486" description="T-cell surface glycoprotein CD3 delta chain">
    <location>
        <begin position="22"/>
        <end position="168"/>
    </location>
</feature>
<feature type="topological domain" description="Extracellular" evidence="3">
    <location>
        <begin position="22"/>
        <end position="102"/>
    </location>
</feature>
<feature type="transmembrane region" description="Helical" evidence="3">
    <location>
        <begin position="103"/>
        <end position="123"/>
    </location>
</feature>
<feature type="topological domain" description="Cytoplasmic" evidence="3">
    <location>
        <begin position="124"/>
        <end position="168"/>
    </location>
</feature>
<feature type="domain" description="ITAM" evidence="4">
    <location>
        <begin position="135"/>
        <end position="163"/>
    </location>
</feature>
<feature type="modified residue" description="Phosphotyrosine" evidence="2 4">
    <location>
        <position position="146"/>
    </location>
</feature>
<feature type="modified residue" description="Phosphotyrosine" evidence="2 4">
    <location>
        <position position="157"/>
    </location>
</feature>
<feature type="glycosylation site" description="N-linked (GlcNAc...) asparagine" evidence="3">
    <location>
        <position position="38"/>
    </location>
</feature>
<feature type="glycosylation site" description="N-linked (GlcNAc...) asparagine" evidence="3">
    <location>
        <position position="56"/>
    </location>
</feature>
<feature type="disulfide bond" evidence="1">
    <location>
        <begin position="37"/>
        <end position="74"/>
    </location>
</feature>
<feature type="sequence conflict" description="In Ref. 2; CAA37367." evidence="5" ref="2">
    <location>
        <begin position="58"/>
        <end position="60"/>
    </location>
</feature>
<organism>
    <name type="scientific">Bos taurus</name>
    <name type="common">Bovine</name>
    <dbReference type="NCBI Taxonomy" id="9913"/>
    <lineage>
        <taxon>Eukaryota</taxon>
        <taxon>Metazoa</taxon>
        <taxon>Chordata</taxon>
        <taxon>Craniata</taxon>
        <taxon>Vertebrata</taxon>
        <taxon>Euteleostomi</taxon>
        <taxon>Mammalia</taxon>
        <taxon>Eutheria</taxon>
        <taxon>Laurasiatheria</taxon>
        <taxon>Artiodactyla</taxon>
        <taxon>Ruminantia</taxon>
        <taxon>Pecora</taxon>
        <taxon>Bovidae</taxon>
        <taxon>Bovinae</taxon>
        <taxon>Bos</taxon>
    </lineage>
</organism>
<evidence type="ECO:0000250" key="1"/>
<evidence type="ECO:0000250" key="2">
    <source>
        <dbReference type="UniProtKB" id="P04234"/>
    </source>
</evidence>
<evidence type="ECO:0000255" key="3"/>
<evidence type="ECO:0000255" key="4">
    <source>
        <dbReference type="PROSITE-ProRule" id="PRU00379"/>
    </source>
</evidence>
<evidence type="ECO:0000305" key="5"/>
<accession>Q28072</accession>
<accession>Q3SZH3</accession>